<accession>Q75QW1</accession>
<dbReference type="EMBL" id="AB161197">
    <property type="protein sequence ID" value="BAD08374.1"/>
    <property type="molecule type" value="mRNA"/>
</dbReference>
<dbReference type="RefSeq" id="NP_999584.1">
    <property type="nucleotide sequence ID" value="NM_214419.1"/>
</dbReference>
<dbReference type="SMR" id="Q75QW1"/>
<dbReference type="FunCoup" id="Q75QW1">
    <property type="interactions" value="79"/>
</dbReference>
<dbReference type="STRING" id="9823.ENSSSCP00000008996"/>
<dbReference type="GlyCosmos" id="Q75QW1">
    <property type="glycosylation" value="3 sites, No reported glycans"/>
</dbReference>
<dbReference type="GlyGen" id="Q75QW1">
    <property type="glycosylation" value="3 sites"/>
</dbReference>
<dbReference type="PaxDb" id="9823-ENSSSCP00000008996"/>
<dbReference type="PeptideAtlas" id="Q75QW1"/>
<dbReference type="Ensembl" id="ENSSSCT00000061463.2">
    <property type="protein sequence ID" value="ENSSSCP00000045246.1"/>
    <property type="gene ID" value="ENSSSCG00000008429.6"/>
</dbReference>
<dbReference type="Ensembl" id="ENSSSCT00030004106.1">
    <property type="protein sequence ID" value="ENSSSCP00030001625.1"/>
    <property type="gene ID" value="ENSSSCG00030002993.1"/>
</dbReference>
<dbReference type="Ensembl" id="ENSSSCT00035075603.1">
    <property type="protein sequence ID" value="ENSSSCP00035030790.1"/>
    <property type="gene ID" value="ENSSSCG00035056583.1"/>
</dbReference>
<dbReference type="Ensembl" id="ENSSSCT00040016447.1">
    <property type="protein sequence ID" value="ENSSSCP00040006601.1"/>
    <property type="gene ID" value="ENSSSCG00040012351.1"/>
</dbReference>
<dbReference type="Ensembl" id="ENSSSCT00045057516.1">
    <property type="protein sequence ID" value="ENSSSCP00045040226.1"/>
    <property type="gene ID" value="ENSSSCG00045033606.1"/>
</dbReference>
<dbReference type="Ensembl" id="ENSSSCT00050072337.1">
    <property type="protein sequence ID" value="ENSSSCP00050031111.1"/>
    <property type="gene ID" value="ENSSSCG00050053079.1"/>
</dbReference>
<dbReference type="Ensembl" id="ENSSSCT00055039113.1">
    <property type="protein sequence ID" value="ENSSSCP00055031106.1"/>
    <property type="gene ID" value="ENSSSCG00055019863.1"/>
</dbReference>
<dbReference type="Ensembl" id="ENSSSCT00060040228.1">
    <property type="protein sequence ID" value="ENSSSCP00060017035.1"/>
    <property type="gene ID" value="ENSSSCG00060029769.1"/>
</dbReference>
<dbReference type="Ensembl" id="ENSSSCT00070001323.1">
    <property type="protein sequence ID" value="ENSSSCP00070001159.1"/>
    <property type="gene ID" value="ENSSSCG00070000698.1"/>
</dbReference>
<dbReference type="Ensembl" id="ENSSSCT00085052478">
    <property type="protein sequence ID" value="ENSSSCP00085036656"/>
    <property type="gene ID" value="ENSSSCG00085027424"/>
</dbReference>
<dbReference type="Ensembl" id="ENSSSCT00105016923">
    <property type="protein sequence ID" value="ENSSSCP00105012001"/>
    <property type="gene ID" value="ENSSSCG00105008504"/>
</dbReference>
<dbReference type="Ensembl" id="ENSSSCT00110003961">
    <property type="protein sequence ID" value="ENSSSCP00110003067"/>
    <property type="gene ID" value="ENSSSCG00110001840"/>
</dbReference>
<dbReference type="Ensembl" id="ENSSSCT00130025099">
    <property type="protein sequence ID" value="ENSSSCP00130017267"/>
    <property type="gene ID" value="ENSSSCG00130012731"/>
</dbReference>
<dbReference type="GeneID" id="403163"/>
<dbReference type="KEGG" id="ssc:403163"/>
<dbReference type="CTD" id="4072"/>
<dbReference type="VGNC" id="VGNC:87726">
    <property type="gene designation" value="EPCAM"/>
</dbReference>
<dbReference type="eggNOG" id="ENOG502QVSU">
    <property type="taxonomic scope" value="Eukaryota"/>
</dbReference>
<dbReference type="GeneTree" id="ENSGT00390000018245"/>
<dbReference type="HOGENOM" id="CLU_075326_0_0_1"/>
<dbReference type="InParanoid" id="Q75QW1"/>
<dbReference type="OMA" id="CQCKSIG"/>
<dbReference type="OrthoDB" id="8953056at2759"/>
<dbReference type="TreeFam" id="TF332767"/>
<dbReference type="Reactome" id="R-SSC-202733">
    <property type="pathway name" value="Cell surface interactions at the vascular wall"/>
</dbReference>
<dbReference type="Proteomes" id="UP000008227">
    <property type="component" value="Chromosome 3"/>
</dbReference>
<dbReference type="Proteomes" id="UP000314985">
    <property type="component" value="Chromosome 3"/>
</dbReference>
<dbReference type="Proteomes" id="UP000694570">
    <property type="component" value="Unplaced"/>
</dbReference>
<dbReference type="Proteomes" id="UP000694571">
    <property type="component" value="Unplaced"/>
</dbReference>
<dbReference type="Proteomes" id="UP000694720">
    <property type="component" value="Unplaced"/>
</dbReference>
<dbReference type="Proteomes" id="UP000694722">
    <property type="component" value="Unplaced"/>
</dbReference>
<dbReference type="Proteomes" id="UP000694723">
    <property type="component" value="Unplaced"/>
</dbReference>
<dbReference type="Proteomes" id="UP000694724">
    <property type="component" value="Unplaced"/>
</dbReference>
<dbReference type="Proteomes" id="UP000694725">
    <property type="component" value="Unplaced"/>
</dbReference>
<dbReference type="Proteomes" id="UP000694726">
    <property type="component" value="Unplaced"/>
</dbReference>
<dbReference type="Proteomes" id="UP000694727">
    <property type="component" value="Unplaced"/>
</dbReference>
<dbReference type="Proteomes" id="UP000694728">
    <property type="component" value="Unplaced"/>
</dbReference>
<dbReference type="Bgee" id="ENSSSCG00000008429">
    <property type="expression patterns" value="Expressed in epididymis and 35 other cell types or tissues"/>
</dbReference>
<dbReference type="ExpressionAtlas" id="Q75QW1">
    <property type="expression patterns" value="baseline and differential"/>
</dbReference>
<dbReference type="GO" id="GO:0005923">
    <property type="term" value="C:bicellular tight junction"/>
    <property type="evidence" value="ECO:0000250"/>
    <property type="project" value="UniProtKB"/>
</dbReference>
<dbReference type="GO" id="GO:0016328">
    <property type="term" value="C:lateral plasma membrane"/>
    <property type="evidence" value="ECO:0000250"/>
    <property type="project" value="UniProtKB"/>
</dbReference>
<dbReference type="GO" id="GO:0005886">
    <property type="term" value="C:plasma membrane"/>
    <property type="evidence" value="ECO:0000250"/>
    <property type="project" value="UniProtKB"/>
</dbReference>
<dbReference type="GO" id="GO:0098641">
    <property type="term" value="F:cadherin binding involved in cell-cell adhesion"/>
    <property type="evidence" value="ECO:0000318"/>
    <property type="project" value="GO_Central"/>
</dbReference>
<dbReference type="GO" id="GO:0008284">
    <property type="term" value="P:positive regulation of cell population proliferation"/>
    <property type="evidence" value="ECO:0000250"/>
    <property type="project" value="UniProtKB"/>
</dbReference>
<dbReference type="CDD" id="cd00191">
    <property type="entry name" value="TY"/>
    <property type="match status" value="1"/>
</dbReference>
<dbReference type="FunFam" id="4.10.800.10:FF:000015">
    <property type="entry name" value="Epithelial cell adhesion molecule"/>
    <property type="match status" value="1"/>
</dbReference>
<dbReference type="Gene3D" id="4.10.800.10">
    <property type="entry name" value="Thyroglobulin type-1"/>
    <property type="match status" value="1"/>
</dbReference>
<dbReference type="InterPro" id="IPR049420">
    <property type="entry name" value="EPCAM-Trop-2_C"/>
</dbReference>
<dbReference type="InterPro" id="IPR043406">
    <property type="entry name" value="EPCAM/Trop-2"/>
</dbReference>
<dbReference type="InterPro" id="IPR041630">
    <property type="entry name" value="EpCAM_N"/>
</dbReference>
<dbReference type="InterPro" id="IPR000716">
    <property type="entry name" value="Thyroglobulin_1"/>
</dbReference>
<dbReference type="InterPro" id="IPR036857">
    <property type="entry name" value="Thyroglobulin_1_sf"/>
</dbReference>
<dbReference type="PANTHER" id="PTHR14168:SF2">
    <property type="entry name" value="EPITHELIAL CELL ADHESION MOLECULE"/>
    <property type="match status" value="1"/>
</dbReference>
<dbReference type="PANTHER" id="PTHR14168">
    <property type="entry name" value="TUMOR-ASSOCIATED CALCIUM SIGNAL TRANSDUCER"/>
    <property type="match status" value="1"/>
</dbReference>
<dbReference type="Pfam" id="PF21283">
    <property type="entry name" value="EPCAM-Trop-2_C"/>
    <property type="match status" value="1"/>
</dbReference>
<dbReference type="Pfam" id="PF18635">
    <property type="entry name" value="EpCAM_N"/>
    <property type="match status" value="1"/>
</dbReference>
<dbReference type="Pfam" id="PF00086">
    <property type="entry name" value="Thyroglobulin_1"/>
    <property type="match status" value="1"/>
</dbReference>
<dbReference type="SMART" id="SM00211">
    <property type="entry name" value="TY"/>
    <property type="match status" value="1"/>
</dbReference>
<dbReference type="SUPFAM" id="SSF57610">
    <property type="entry name" value="Thyroglobulin type-1 domain"/>
    <property type="match status" value="1"/>
</dbReference>
<dbReference type="PROSITE" id="PS00484">
    <property type="entry name" value="THYROGLOBULIN_1_1"/>
    <property type="match status" value="1"/>
</dbReference>
<dbReference type="PROSITE" id="PS51162">
    <property type="entry name" value="THYROGLOBULIN_1_2"/>
    <property type="match status" value="1"/>
</dbReference>
<comment type="function">
    <text evidence="1 5">May act as a physical homophilic interaction molecule between intestinal epithelial cells (IECs) and intraepithelial lymphocytes (IELs) at the mucosal epithelium for providing immunological barrier as a first line of defense against mucosal infection. Plays a role in embryonic stem cells proliferation and differentiation. Up-regulates the expression of FABP5, MYC and cyclins A and E (By similarity).</text>
</comment>
<comment type="subunit">
    <text evidence="1">Monomer. Interacts with phosphorylated CLDN7 (By similarity).</text>
</comment>
<comment type="subcellular location">
    <subcellularLocation>
        <location evidence="2">Lateral cell membrane</location>
        <topology evidence="2">Single-pass type I membrane protein</topology>
    </subcellularLocation>
    <subcellularLocation>
        <location evidence="2">Cell junction</location>
        <location evidence="2">Tight junction</location>
    </subcellularLocation>
    <text evidence="2">Colocalizes with CLDN7 at the lateral cell membrane and tight junction.</text>
</comment>
<comment type="PTM">
    <text evidence="1">Glycosylation at Asn-198 is crucial for protein stability.</text>
</comment>
<comment type="similarity">
    <text evidence="6">Belongs to the EPCAM family.</text>
</comment>
<keyword id="KW-0965">Cell junction</keyword>
<keyword id="KW-1003">Cell membrane</keyword>
<keyword id="KW-1015">Disulfide bond</keyword>
<keyword id="KW-0325">Glycoprotein</keyword>
<keyword id="KW-0472">Membrane</keyword>
<keyword id="KW-1185">Reference proteome</keyword>
<keyword id="KW-0677">Repeat</keyword>
<keyword id="KW-0732">Signal</keyword>
<keyword id="KW-0796">Tight junction</keyword>
<keyword id="KW-0812">Transmembrane</keyword>
<keyword id="KW-1133">Transmembrane helix</keyword>
<evidence type="ECO:0000250" key="1"/>
<evidence type="ECO:0000250" key="2">
    <source>
        <dbReference type="UniProtKB" id="P16422"/>
    </source>
</evidence>
<evidence type="ECO:0000255" key="3"/>
<evidence type="ECO:0000255" key="4">
    <source>
        <dbReference type="PROSITE-ProRule" id="PRU00500"/>
    </source>
</evidence>
<evidence type="ECO:0000269" key="5">
    <source>
    </source>
</evidence>
<evidence type="ECO:0000305" key="6"/>
<gene>
    <name type="primary">TACSTD1</name>
    <name type="synonym">EPCAM</name>
</gene>
<organism>
    <name type="scientific">Sus scrofa</name>
    <name type="common">Pig</name>
    <dbReference type="NCBI Taxonomy" id="9823"/>
    <lineage>
        <taxon>Eukaryota</taxon>
        <taxon>Metazoa</taxon>
        <taxon>Chordata</taxon>
        <taxon>Craniata</taxon>
        <taxon>Vertebrata</taxon>
        <taxon>Euteleostomi</taxon>
        <taxon>Mammalia</taxon>
        <taxon>Eutheria</taxon>
        <taxon>Laurasiatheria</taxon>
        <taxon>Artiodactyla</taxon>
        <taxon>Suina</taxon>
        <taxon>Suidae</taxon>
        <taxon>Sus</taxon>
    </lineage>
</organism>
<name>EPCAM_PIG</name>
<sequence length="314" mass="34833">MAPPQVLAFGLLLAAATAAVAAAQQGCVCENYKLTTNCSLNALGQCQCTSIGAQNSVICSKLASKCLVMKAEMTGSKAGRRLKPENAIQNNDGLYDPDCDENGLFKAKQCNGTSMCWCVNTAGVRRTDKDSEISCLERVRTYWIIIELKHKTREKPYDVTSLQNALKEVITDRYQLDPKYITNILYENDIITIDLVQNSSQKTLNEVDIADVAYYFEKDVKDESLFHSKRMDLRVNGELLDLDPGQTSIYYVDEKPPEFSMQGLQAGIIAVIAVVAIAIVAGIIVLIVSTKKRRAKYEKAEIKEMGEMHRELNA</sequence>
<protein>
    <recommendedName>
        <fullName>Epithelial cell adhesion molecule</fullName>
        <shortName>Ep-CAM</shortName>
    </recommendedName>
    <alternativeName>
        <fullName>Tumor-associated calcium signal transducer 1</fullName>
    </alternativeName>
    <cdAntigenName>CD326</cdAntigenName>
</protein>
<reference key="1">
    <citation type="journal article" date="2004" name="Clin. Immunol.">
        <title>Biological role of Ep-CAM in the physical interaction between epithelial cells and lymphocytes in intestinal epithelium.</title>
        <authorList>
            <person name="Nochi T."/>
            <person name="Yuki Y."/>
            <person name="Terahara K."/>
            <person name="Hino A."/>
            <person name="Kunisawa J."/>
            <person name="Kweon M.N."/>
            <person name="Yamaguchi T."/>
            <person name="Kiyono H."/>
        </authorList>
    </citation>
    <scope>NUCLEOTIDE SEQUENCE [MRNA]</scope>
    <scope>FUNCTION</scope>
</reference>
<proteinExistence type="evidence at transcript level"/>
<feature type="signal peptide" evidence="3">
    <location>
        <begin position="1"/>
        <end position="23"/>
    </location>
</feature>
<feature type="chain" id="PRO_0000380184" description="Epithelial cell adhesion molecule">
    <location>
        <begin position="24"/>
        <end position="314"/>
    </location>
</feature>
<feature type="topological domain" description="Extracellular" evidence="3">
    <location>
        <begin position="24"/>
        <end position="265"/>
    </location>
</feature>
<feature type="transmembrane region" description="Helical" evidence="3">
    <location>
        <begin position="266"/>
        <end position="288"/>
    </location>
</feature>
<feature type="topological domain" description="Cytoplasmic" evidence="3">
    <location>
        <begin position="289"/>
        <end position="314"/>
    </location>
</feature>
<feature type="domain" description="Thyroglobulin type-1" evidence="4">
    <location>
        <begin position="63"/>
        <end position="135"/>
    </location>
</feature>
<feature type="glycosylation site" description="N-linked (GlcNAc...) asparagine" evidence="3">
    <location>
        <position position="37"/>
    </location>
</feature>
<feature type="glycosylation site" description="N-linked (GlcNAc...) asparagine" evidence="3">
    <location>
        <position position="111"/>
    </location>
</feature>
<feature type="glycosylation site" description="N-linked (GlcNAc...) asparagine" evidence="3">
    <location>
        <position position="198"/>
    </location>
</feature>
<feature type="disulfide bond" evidence="4">
    <location>
        <begin position="27"/>
        <end position="46"/>
    </location>
</feature>
<feature type="disulfide bond" evidence="4">
    <location>
        <begin position="29"/>
        <end position="59"/>
    </location>
</feature>
<feature type="disulfide bond" evidence="4">
    <location>
        <begin position="38"/>
        <end position="48"/>
    </location>
</feature>
<feature type="disulfide bond" evidence="4">
    <location>
        <begin position="66"/>
        <end position="99"/>
    </location>
</feature>
<feature type="disulfide bond" evidence="4">
    <location>
        <begin position="110"/>
        <end position="116"/>
    </location>
</feature>
<feature type="disulfide bond" evidence="4">
    <location>
        <begin position="118"/>
        <end position="135"/>
    </location>
</feature>